<organism>
    <name type="scientific">Homo sapiens</name>
    <name type="common">Human</name>
    <dbReference type="NCBI Taxonomy" id="9606"/>
    <lineage>
        <taxon>Eukaryota</taxon>
        <taxon>Metazoa</taxon>
        <taxon>Chordata</taxon>
        <taxon>Craniata</taxon>
        <taxon>Vertebrata</taxon>
        <taxon>Euteleostomi</taxon>
        <taxon>Mammalia</taxon>
        <taxon>Eutheria</taxon>
        <taxon>Euarchontoglires</taxon>
        <taxon>Primates</taxon>
        <taxon>Haplorrhini</taxon>
        <taxon>Catarrhini</taxon>
        <taxon>Hominidae</taxon>
        <taxon>Homo</taxon>
    </lineage>
</organism>
<accession>A6NND4</accession>
<accession>B9EGZ8</accession>
<reference key="1">
    <citation type="journal article" date="2006" name="Nature">
        <title>Human chromosome 11 DNA sequence and analysis including novel gene identification.</title>
        <authorList>
            <person name="Taylor T.D."/>
            <person name="Noguchi H."/>
            <person name="Totoki Y."/>
            <person name="Toyoda A."/>
            <person name="Kuroki Y."/>
            <person name="Dewar K."/>
            <person name="Lloyd C."/>
            <person name="Itoh T."/>
            <person name="Takeda T."/>
            <person name="Kim D.-W."/>
            <person name="She X."/>
            <person name="Barlow K.F."/>
            <person name="Bloom T."/>
            <person name="Bruford E."/>
            <person name="Chang J.L."/>
            <person name="Cuomo C.A."/>
            <person name="Eichler E."/>
            <person name="FitzGerald M.G."/>
            <person name="Jaffe D.B."/>
            <person name="LaButti K."/>
            <person name="Nicol R."/>
            <person name="Park H.-S."/>
            <person name="Seaman C."/>
            <person name="Sougnez C."/>
            <person name="Yang X."/>
            <person name="Zimmer A.R."/>
            <person name="Zody M.C."/>
            <person name="Birren B.W."/>
            <person name="Nusbaum C."/>
            <person name="Fujiyama A."/>
            <person name="Hattori M."/>
            <person name="Rogers J."/>
            <person name="Lander E.S."/>
            <person name="Sakaki Y."/>
        </authorList>
    </citation>
    <scope>NUCLEOTIDE SEQUENCE [LARGE SCALE GENOMIC DNA]</scope>
</reference>
<reference key="2">
    <citation type="journal article" date="2004" name="Genome Res.">
        <title>The status, quality, and expansion of the NIH full-length cDNA project: the Mammalian Gene Collection (MGC).</title>
        <authorList>
            <consortium name="The MGC Project Team"/>
        </authorList>
    </citation>
    <scope>NUCLEOTIDE SEQUENCE [LARGE SCALE MRNA]</scope>
    <source>
        <tissue>Testis</tissue>
    </source>
</reference>
<reference key="3">
    <citation type="journal article" date="2004" name="Proc. Natl. Acad. Sci. U.S.A.">
        <title>The human olfactory receptor gene family.</title>
        <authorList>
            <person name="Malnic B."/>
            <person name="Godfrey P.A."/>
            <person name="Buck L.B."/>
        </authorList>
    </citation>
    <scope>IDENTIFICATION</scope>
</reference>
<reference key="4">
    <citation type="journal article" date="2004" name="Proc. Natl. Acad. Sci. U.S.A.">
        <authorList>
            <person name="Malnic B."/>
            <person name="Godfrey P.A."/>
            <person name="Buck L.B."/>
        </authorList>
    </citation>
    <scope>ERRATUM OF PUBMED:14983052</scope>
</reference>
<reference key="5">
    <citation type="journal article" date="2014" name="J. Invest. Dermatol.">
        <title>A synthetic sandalwood odorant induces wound-healing processes in human keratinocytes via the olfactory receptor OR2AT4.</title>
        <authorList>
            <person name="Busse D."/>
            <person name="Kudella P."/>
            <person name="Gruening N.M."/>
            <person name="Gisselmann G."/>
            <person name="Staender S."/>
            <person name="Luger T."/>
            <person name="Jacobsen F."/>
            <person name="Steinstraesser L."/>
            <person name="Paus R."/>
            <person name="Gkogkolou P."/>
            <person name="Boehm M."/>
            <person name="Hatt H."/>
            <person name="Benecke H."/>
        </authorList>
    </citation>
    <scope>TISSUE SPECIFICITY</scope>
    <scope>SUBCELLULAR LOCATION</scope>
    <scope>FUNCTION</scope>
</reference>
<reference key="6">
    <citation type="journal article" date="2018" name="Nat. Commun.">
        <title>Olfactory receptor OR2AT4 regulates human hair growth.</title>
        <authorList>
            <person name="Cheret J."/>
            <person name="Bertolini M."/>
            <person name="Ponce L."/>
            <person name="Lehmann J."/>
            <person name="Tsai T."/>
            <person name="Alam M."/>
            <person name="Hatt H."/>
            <person name="Paus R."/>
        </authorList>
    </citation>
    <scope>TISSUE SPECIFICITY</scope>
    <scope>FUNCTION</scope>
</reference>
<protein>
    <recommendedName>
        <fullName>Olfactory receptor 2AT4</fullName>
    </recommendedName>
    <alternativeName>
        <fullName>Olfactory receptor OR11-265</fullName>
    </alternativeName>
</protein>
<dbReference type="EMBL" id="AP003175">
    <property type="status" value="NOT_ANNOTATED_CDS"/>
    <property type="molecule type" value="Genomic_DNA"/>
</dbReference>
<dbReference type="EMBL" id="BC136958">
    <property type="protein sequence ID" value="AAI36959.1"/>
    <property type="molecule type" value="mRNA"/>
</dbReference>
<dbReference type="EMBL" id="BC136959">
    <property type="protein sequence ID" value="AAI36960.1"/>
    <property type="molecule type" value="mRNA"/>
</dbReference>
<dbReference type="EMBL" id="BK004820">
    <property type="status" value="NOT_ANNOTATED_CDS"/>
    <property type="molecule type" value="Genomic_DNA"/>
</dbReference>
<dbReference type="CCDS" id="CCDS31639.1"/>
<dbReference type="RefSeq" id="NP_001005285.1">
    <property type="nucleotide sequence ID" value="NM_001005285.2"/>
</dbReference>
<dbReference type="RefSeq" id="NP_001392781.1">
    <property type="nucleotide sequence ID" value="NM_001405852.1"/>
</dbReference>
<dbReference type="RefSeq" id="XP_016873144.1">
    <property type="nucleotide sequence ID" value="XM_017017655.1"/>
</dbReference>
<dbReference type="RefSeq" id="XP_016873145.1">
    <property type="nucleotide sequence ID" value="XM_017017656.1"/>
</dbReference>
<dbReference type="RefSeq" id="XP_016873146.1">
    <property type="nucleotide sequence ID" value="XM_017017657.1"/>
</dbReference>
<dbReference type="RefSeq" id="XP_016873147.1">
    <property type="nucleotide sequence ID" value="XM_017017658.1"/>
</dbReference>
<dbReference type="SMR" id="A6NND4"/>
<dbReference type="FunCoup" id="A6NND4">
    <property type="interactions" value="800"/>
</dbReference>
<dbReference type="STRING" id="9606.ENSP00000493299"/>
<dbReference type="GlyCosmos" id="A6NND4">
    <property type="glycosylation" value="1 site, No reported glycans"/>
</dbReference>
<dbReference type="GlyGen" id="A6NND4">
    <property type="glycosylation" value="1 site"/>
</dbReference>
<dbReference type="PhosphoSitePlus" id="A6NND4"/>
<dbReference type="BioMuta" id="OR2AT4"/>
<dbReference type="PaxDb" id="9606-ENSP00000304846"/>
<dbReference type="PeptideAtlas" id="A6NND4"/>
<dbReference type="Antibodypedia" id="56326">
    <property type="antibodies" value="99 antibodies from 20 providers"/>
</dbReference>
<dbReference type="DNASU" id="341152"/>
<dbReference type="Ensembl" id="ENST00000305159.3">
    <property type="protein sequence ID" value="ENSP00000304846.3"/>
    <property type="gene ID" value="ENSG00000171561.4"/>
</dbReference>
<dbReference type="Ensembl" id="ENST00000641504.1">
    <property type="protein sequence ID" value="ENSP00000493318.1"/>
    <property type="gene ID" value="ENSG00000171561.4"/>
</dbReference>
<dbReference type="Ensembl" id="ENST00000641541.1">
    <property type="protein sequence ID" value="ENSP00000493299.1"/>
    <property type="gene ID" value="ENSG00000171561.4"/>
</dbReference>
<dbReference type="Ensembl" id="ENST00000641593.1">
    <property type="protein sequence ID" value="ENSP00000493416.1"/>
    <property type="gene ID" value="ENSG00000171561.4"/>
</dbReference>
<dbReference type="Ensembl" id="ENST00000641931.1">
    <property type="protein sequence ID" value="ENSP00000493460.1"/>
    <property type="gene ID" value="ENSG00000171561.4"/>
</dbReference>
<dbReference type="GeneID" id="341152"/>
<dbReference type="KEGG" id="hsa:341152"/>
<dbReference type="MANE-Select" id="ENST00000641504.1">
    <property type="protein sequence ID" value="ENSP00000493318.1"/>
    <property type="RefSeq nucleotide sequence ID" value="NM_001405852.1"/>
    <property type="RefSeq protein sequence ID" value="NP_001392781.1"/>
</dbReference>
<dbReference type="UCSC" id="uc010rro.3">
    <property type="organism name" value="human"/>
</dbReference>
<dbReference type="AGR" id="HGNC:19620"/>
<dbReference type="CTD" id="341152"/>
<dbReference type="GeneCards" id="OR2AT4"/>
<dbReference type="HGNC" id="HGNC:19620">
    <property type="gene designation" value="OR2AT4"/>
</dbReference>
<dbReference type="HPA" id="ENSG00000171561">
    <property type="expression patterns" value="Tissue enhanced (bone marrow, retina)"/>
</dbReference>
<dbReference type="neXtProt" id="NX_A6NND4"/>
<dbReference type="PharmGKB" id="PA134941860"/>
<dbReference type="VEuPathDB" id="HostDB:ENSG00000171561"/>
<dbReference type="eggNOG" id="ENOG502SJUD">
    <property type="taxonomic scope" value="Eukaryota"/>
</dbReference>
<dbReference type="GeneTree" id="ENSGT00940000163113"/>
<dbReference type="HOGENOM" id="CLU_012526_0_1_1"/>
<dbReference type="InParanoid" id="A6NND4"/>
<dbReference type="OMA" id="AITKITY"/>
<dbReference type="OrthoDB" id="6144223at2759"/>
<dbReference type="PAN-GO" id="A6NND4">
    <property type="GO annotations" value="3 GO annotations based on evolutionary models"/>
</dbReference>
<dbReference type="PhylomeDB" id="A6NND4"/>
<dbReference type="TreeFam" id="TF337194"/>
<dbReference type="PathwayCommons" id="A6NND4"/>
<dbReference type="Reactome" id="R-HSA-381753">
    <property type="pathway name" value="Olfactory Signaling Pathway"/>
</dbReference>
<dbReference type="Reactome" id="R-HSA-9752946">
    <property type="pathway name" value="Expression and translocation of olfactory receptors"/>
</dbReference>
<dbReference type="BioGRID-ORCS" id="341152">
    <property type="hits" value="8 hits in 748 CRISPR screens"/>
</dbReference>
<dbReference type="ChiTaRS" id="OR2AT4">
    <property type="organism name" value="human"/>
</dbReference>
<dbReference type="GenomeRNAi" id="341152"/>
<dbReference type="Pharos" id="A6NND4">
    <property type="development level" value="Tbio"/>
</dbReference>
<dbReference type="PRO" id="PR:A6NND4"/>
<dbReference type="Proteomes" id="UP000005640">
    <property type="component" value="Chromosome 11"/>
</dbReference>
<dbReference type="RNAct" id="A6NND4">
    <property type="molecule type" value="protein"/>
</dbReference>
<dbReference type="Bgee" id="ENSG00000171561">
    <property type="expression patterns" value="Expressed in sural nerve and 1 other cell type or tissue"/>
</dbReference>
<dbReference type="ExpressionAtlas" id="A6NND4">
    <property type="expression patterns" value="baseline and differential"/>
</dbReference>
<dbReference type="GO" id="GO:0005886">
    <property type="term" value="C:plasma membrane"/>
    <property type="evidence" value="ECO:0000314"/>
    <property type="project" value="UniProtKB"/>
</dbReference>
<dbReference type="GO" id="GO:0004930">
    <property type="term" value="F:G protein-coupled receptor activity"/>
    <property type="evidence" value="ECO:0007669"/>
    <property type="project" value="UniProtKB-KW"/>
</dbReference>
<dbReference type="GO" id="GO:0004984">
    <property type="term" value="F:olfactory receptor activity"/>
    <property type="evidence" value="ECO:0000314"/>
    <property type="project" value="UniProtKB"/>
</dbReference>
<dbReference type="GO" id="GO:0070374">
    <property type="term" value="P:positive regulation of ERK1 and ERK2 cascade"/>
    <property type="evidence" value="ECO:0000315"/>
    <property type="project" value="UniProtKB"/>
</dbReference>
<dbReference type="GO" id="GO:0007165">
    <property type="term" value="P:signal transduction"/>
    <property type="evidence" value="ECO:0000318"/>
    <property type="project" value="GO_Central"/>
</dbReference>
<dbReference type="CDD" id="cd13954">
    <property type="entry name" value="7tmA_OR"/>
    <property type="match status" value="1"/>
</dbReference>
<dbReference type="FunFam" id="1.10.1220.70:FF:000001">
    <property type="entry name" value="Olfactory receptor"/>
    <property type="match status" value="1"/>
</dbReference>
<dbReference type="FunFam" id="1.20.1070.10:FF:000024">
    <property type="entry name" value="Olfactory receptor"/>
    <property type="match status" value="1"/>
</dbReference>
<dbReference type="Gene3D" id="1.20.1070.10">
    <property type="entry name" value="Rhodopsin 7-helix transmembrane proteins"/>
    <property type="match status" value="1"/>
</dbReference>
<dbReference type="InterPro" id="IPR000276">
    <property type="entry name" value="GPCR_Rhodpsn"/>
</dbReference>
<dbReference type="InterPro" id="IPR017452">
    <property type="entry name" value="GPCR_Rhodpsn_7TM"/>
</dbReference>
<dbReference type="InterPro" id="IPR000725">
    <property type="entry name" value="Olfact_rcpt"/>
</dbReference>
<dbReference type="InterPro" id="IPR050939">
    <property type="entry name" value="Olfactory_GPCR1"/>
</dbReference>
<dbReference type="PANTHER" id="PTHR24242">
    <property type="entry name" value="G-PROTEIN COUPLED RECEPTOR"/>
    <property type="match status" value="1"/>
</dbReference>
<dbReference type="PANTHER" id="PTHR24242:SF253">
    <property type="entry name" value="OLFACTORY RECEPTOR-RELATED"/>
    <property type="match status" value="1"/>
</dbReference>
<dbReference type="Pfam" id="PF13853">
    <property type="entry name" value="7tm_4"/>
    <property type="match status" value="1"/>
</dbReference>
<dbReference type="PRINTS" id="PR00237">
    <property type="entry name" value="GPCRRHODOPSN"/>
</dbReference>
<dbReference type="PRINTS" id="PR00245">
    <property type="entry name" value="OLFACTORYR"/>
</dbReference>
<dbReference type="SUPFAM" id="SSF81321">
    <property type="entry name" value="Family A G protein-coupled receptor-like"/>
    <property type="match status" value="1"/>
</dbReference>
<dbReference type="PROSITE" id="PS00237">
    <property type="entry name" value="G_PROTEIN_RECEP_F1_1"/>
    <property type="match status" value="1"/>
</dbReference>
<dbReference type="PROSITE" id="PS50262">
    <property type="entry name" value="G_PROTEIN_RECEP_F1_2"/>
    <property type="match status" value="1"/>
</dbReference>
<keyword id="KW-1003">Cell membrane</keyword>
<keyword id="KW-1015">Disulfide bond</keyword>
<keyword id="KW-0297">G-protein coupled receptor</keyword>
<keyword id="KW-0325">Glycoprotein</keyword>
<keyword id="KW-0472">Membrane</keyword>
<keyword id="KW-0552">Olfaction</keyword>
<keyword id="KW-0675">Receptor</keyword>
<keyword id="KW-1185">Reference proteome</keyword>
<keyword id="KW-0716">Sensory transduction</keyword>
<keyword id="KW-0807">Transducer</keyword>
<keyword id="KW-0812">Transmembrane</keyword>
<keyword id="KW-1133">Transmembrane helix</keyword>
<proteinExistence type="evidence at protein level"/>
<name>O2AT4_HUMAN</name>
<sequence>MDATACNESVDGSPVFYLLGIPSLPETFFLPVFFIFLLFYLLILMGNALILVAVVAEPSLHKPMYFFLINLSTLDILFTTTTVPKMLSLFLLGDRFLSFSSCLLQMYLFQSFTCSEAFILVVMAYDRYVAICHPLHYPVLMNPQTNATLAASAWLTALLLPIPAVVRTSQMAYNSIAYIYHCFCDHLAVVQASCSDTTPQTLMGFCIAMVVSFLPLLLVLLSYVHILASVLRISSLEGRAKAFSTCSSHLLVVGTYYSSIAIAYVAYRADLPLDFHIMGNVVYAILTPILNPLIYTLRNRDVKAAITKIMSQDPGCDRSI</sequence>
<gene>
    <name evidence="5 7" type="primary">OR2AT4</name>
</gene>
<evidence type="ECO:0000255" key="1"/>
<evidence type="ECO:0000255" key="2">
    <source>
        <dbReference type="PROSITE-ProRule" id="PRU00521"/>
    </source>
</evidence>
<evidence type="ECO:0000269" key="3">
    <source>
    </source>
</evidence>
<evidence type="ECO:0000269" key="4">
    <source>
    </source>
</evidence>
<evidence type="ECO:0000303" key="5">
    <source>
    </source>
</evidence>
<evidence type="ECO:0000305" key="6"/>
<evidence type="ECO:0000312" key="7">
    <source>
        <dbReference type="HGNC" id="HGNC:19620"/>
    </source>
</evidence>
<feature type="chain" id="PRO_0000310866" description="Olfactory receptor 2AT4">
    <location>
        <begin position="1"/>
        <end position="320"/>
    </location>
</feature>
<feature type="topological domain" description="Extracellular" evidence="1">
    <location>
        <begin position="1"/>
        <end position="31"/>
    </location>
</feature>
<feature type="transmembrane region" description="Helical; Name=1" evidence="1">
    <location>
        <begin position="32"/>
        <end position="52"/>
    </location>
</feature>
<feature type="topological domain" description="Cytoplasmic" evidence="1">
    <location>
        <begin position="53"/>
        <end position="62"/>
    </location>
</feature>
<feature type="transmembrane region" description="Helical; Name=2" evidence="1">
    <location>
        <begin position="63"/>
        <end position="83"/>
    </location>
</feature>
<feature type="topological domain" description="Extracellular" evidence="1">
    <location>
        <begin position="84"/>
        <end position="102"/>
    </location>
</feature>
<feature type="transmembrane region" description="Helical; Name=3" evidence="1">
    <location>
        <begin position="103"/>
        <end position="123"/>
    </location>
</feature>
<feature type="topological domain" description="Cytoplasmic" evidence="1">
    <location>
        <begin position="124"/>
        <end position="145"/>
    </location>
</feature>
<feature type="transmembrane region" description="Helical; Name=4" evidence="1">
    <location>
        <begin position="146"/>
        <end position="166"/>
    </location>
</feature>
<feature type="topological domain" description="Extracellular" evidence="1">
    <location>
        <begin position="167"/>
        <end position="200"/>
    </location>
</feature>
<feature type="transmembrane region" description="Helical; Name=5" evidence="1">
    <location>
        <begin position="201"/>
        <end position="221"/>
    </location>
</feature>
<feature type="topological domain" description="Cytoplasmic" evidence="1">
    <location>
        <begin position="222"/>
        <end position="245"/>
    </location>
</feature>
<feature type="transmembrane region" description="Helical; Name=6" evidence="1">
    <location>
        <begin position="246"/>
        <end position="266"/>
    </location>
</feature>
<feature type="topological domain" description="Extracellular" evidence="1">
    <location>
        <begin position="267"/>
        <end position="276"/>
    </location>
</feature>
<feature type="transmembrane region" description="Helical; Name=7" evidence="1">
    <location>
        <begin position="277"/>
        <end position="297"/>
    </location>
</feature>
<feature type="topological domain" description="Cytoplasmic" evidence="1">
    <location>
        <begin position="298"/>
        <end position="320"/>
    </location>
</feature>
<feature type="glycosylation site" description="N-linked (GlcNAc...) asparagine" evidence="1">
    <location>
        <position position="7"/>
    </location>
</feature>
<feature type="disulfide bond" evidence="2">
    <location>
        <begin position="102"/>
        <end position="184"/>
    </location>
</feature>
<comment type="function">
    <text evidence="3 4 6">Olfactory receptor (PubMed:24999593, PubMed:30228264). Activated by the synthetic sandalwood odorant sandalore (PubMed:24999593, PubMed:30228264). Endogenous ligand is unknown (Probable). The activity of this receptor is probably mediated by G proteins which induce elevation of intracellular Ca(2+), a cAMP-dependent pathway and phosphorylation of MAPK1/ERK2, MAPK3/ERK1 and p38 MAPKs (PubMed:24999593, PubMed:30228264). Activation of OR2AT4 induces proliferation, migration, and re-epithelialization during wound-healing processes of keratinocytes (PubMed:24999593). Stimulation of OR2AT4 by sandalore promotes hair growth by decreasing apoptosis and increasing production of the anagen-prolonging growth factor IGF1 as well as other pathways involving various kinases (PubMed:30228264).</text>
</comment>
<comment type="subcellular location">
    <subcellularLocation>
        <location evidence="3">Cell membrane</location>
        <topology evidence="1">Multi-pass membrane protein</topology>
    </subcellularLocation>
</comment>
<comment type="tissue specificity">
    <text evidence="3 4">Detected in the keratinocytes of the epidermis (at protein level) (PubMed:24999593). Detected in hair follicles in proximal outer root sheath and hair matrix keratinocytes (at protein level) (PubMed:30228264).</text>
</comment>
<comment type="induction">
    <text evidence="4">Down-regulated during spontaneous, apoptosis-driven hair follicles regression (catagen).</text>
</comment>
<comment type="similarity">
    <text evidence="2">Belongs to the G-protein coupled receptor 1 family.</text>
</comment>
<comment type="online information" name="Human Olfactory Receptor Data Exploratorium (HORDE)">
    <link uri="http://genome.weizmann.ac.il/horde/card/index/symbol:OR2AT4"/>
</comment>